<organism>
    <name type="scientific">Pseudomonas putida (strain ATCC 700007 / DSM 6899 / JCM 31910 / BCRC 17059 / LMG 24140 / F1)</name>
    <dbReference type="NCBI Taxonomy" id="351746"/>
    <lineage>
        <taxon>Bacteria</taxon>
        <taxon>Pseudomonadati</taxon>
        <taxon>Pseudomonadota</taxon>
        <taxon>Gammaproteobacteria</taxon>
        <taxon>Pseudomonadales</taxon>
        <taxon>Pseudomonadaceae</taxon>
        <taxon>Pseudomonas</taxon>
    </lineage>
</organism>
<comment type="function">
    <text evidence="1">Located at the top of the head of the 30S subunit, it contacts several helices of the 16S rRNA. In the 70S ribosome it contacts the 23S rRNA (bridge B1a) and protein L5 of the 50S subunit (bridge B1b), connecting the 2 subunits; these bridges are implicated in subunit movement. Contacts the tRNAs in the A and P-sites.</text>
</comment>
<comment type="subunit">
    <text evidence="1">Part of the 30S ribosomal subunit. Forms a loose heterodimer with protein S19. Forms two bridges to the 50S subunit in the 70S ribosome.</text>
</comment>
<comment type="similarity">
    <text evidence="1">Belongs to the universal ribosomal protein uS13 family.</text>
</comment>
<name>RS13_PSEP1</name>
<feature type="chain" id="PRO_1000051885" description="Small ribosomal subunit protein uS13">
    <location>
        <begin position="1"/>
        <end position="118"/>
    </location>
</feature>
<feature type="region of interest" description="Disordered" evidence="2">
    <location>
        <begin position="92"/>
        <end position="118"/>
    </location>
</feature>
<sequence length="118" mass="13256">MARIAGVNIPDNKHTVISLTYIYGVGRTTAQKICADAGVNPAAKIKDLSDEQIETLRGEVAKFTTEGDLRRDINMKIKRLMDLGCYRGLRHRKGLPVRGQRTKTNARTRKGPRKPIRK</sequence>
<gene>
    <name evidence="1" type="primary">rpsM</name>
    <name type="ordered locus">Pput_0509</name>
</gene>
<keyword id="KW-0687">Ribonucleoprotein</keyword>
<keyword id="KW-0689">Ribosomal protein</keyword>
<keyword id="KW-0694">RNA-binding</keyword>
<keyword id="KW-0699">rRNA-binding</keyword>
<keyword id="KW-0820">tRNA-binding</keyword>
<reference key="1">
    <citation type="submission" date="2007-05" db="EMBL/GenBank/DDBJ databases">
        <title>Complete sequence of Pseudomonas putida F1.</title>
        <authorList>
            <consortium name="US DOE Joint Genome Institute"/>
            <person name="Copeland A."/>
            <person name="Lucas S."/>
            <person name="Lapidus A."/>
            <person name="Barry K."/>
            <person name="Detter J.C."/>
            <person name="Glavina del Rio T."/>
            <person name="Hammon N."/>
            <person name="Israni S."/>
            <person name="Dalin E."/>
            <person name="Tice H."/>
            <person name="Pitluck S."/>
            <person name="Chain P."/>
            <person name="Malfatti S."/>
            <person name="Shin M."/>
            <person name="Vergez L."/>
            <person name="Schmutz J."/>
            <person name="Larimer F."/>
            <person name="Land M."/>
            <person name="Hauser L."/>
            <person name="Kyrpides N."/>
            <person name="Lykidis A."/>
            <person name="Parales R."/>
            <person name="Richardson P."/>
        </authorList>
    </citation>
    <scope>NUCLEOTIDE SEQUENCE [LARGE SCALE GENOMIC DNA]</scope>
    <source>
        <strain>ATCC 700007 / DSM 6899 / JCM 31910 / BCRC 17059 / LMG 24140 / F1</strain>
    </source>
</reference>
<protein>
    <recommendedName>
        <fullName evidence="1">Small ribosomal subunit protein uS13</fullName>
    </recommendedName>
    <alternativeName>
        <fullName evidence="3">30S ribosomal protein S13</fullName>
    </alternativeName>
</protein>
<dbReference type="EMBL" id="CP000712">
    <property type="protein sequence ID" value="ABQ76679.1"/>
    <property type="molecule type" value="Genomic_DNA"/>
</dbReference>
<dbReference type="SMR" id="A5VXR9"/>
<dbReference type="KEGG" id="ppf:Pput_0509"/>
<dbReference type="eggNOG" id="COG0099">
    <property type="taxonomic scope" value="Bacteria"/>
</dbReference>
<dbReference type="HOGENOM" id="CLU_103849_1_2_6"/>
<dbReference type="GO" id="GO:0005829">
    <property type="term" value="C:cytosol"/>
    <property type="evidence" value="ECO:0007669"/>
    <property type="project" value="TreeGrafter"/>
</dbReference>
<dbReference type="GO" id="GO:0015935">
    <property type="term" value="C:small ribosomal subunit"/>
    <property type="evidence" value="ECO:0007669"/>
    <property type="project" value="TreeGrafter"/>
</dbReference>
<dbReference type="GO" id="GO:0019843">
    <property type="term" value="F:rRNA binding"/>
    <property type="evidence" value="ECO:0007669"/>
    <property type="project" value="UniProtKB-UniRule"/>
</dbReference>
<dbReference type="GO" id="GO:0003735">
    <property type="term" value="F:structural constituent of ribosome"/>
    <property type="evidence" value="ECO:0007669"/>
    <property type="project" value="InterPro"/>
</dbReference>
<dbReference type="GO" id="GO:0000049">
    <property type="term" value="F:tRNA binding"/>
    <property type="evidence" value="ECO:0007669"/>
    <property type="project" value="UniProtKB-UniRule"/>
</dbReference>
<dbReference type="GO" id="GO:0006412">
    <property type="term" value="P:translation"/>
    <property type="evidence" value="ECO:0007669"/>
    <property type="project" value="UniProtKB-UniRule"/>
</dbReference>
<dbReference type="FunFam" id="1.10.8.50:FF:000001">
    <property type="entry name" value="30S ribosomal protein S13"/>
    <property type="match status" value="1"/>
</dbReference>
<dbReference type="FunFam" id="4.10.910.10:FF:000001">
    <property type="entry name" value="30S ribosomal protein S13"/>
    <property type="match status" value="1"/>
</dbReference>
<dbReference type="Gene3D" id="1.10.8.50">
    <property type="match status" value="1"/>
</dbReference>
<dbReference type="Gene3D" id="4.10.910.10">
    <property type="entry name" value="30s ribosomal protein s13, domain 2"/>
    <property type="match status" value="1"/>
</dbReference>
<dbReference type="HAMAP" id="MF_01315">
    <property type="entry name" value="Ribosomal_uS13"/>
    <property type="match status" value="1"/>
</dbReference>
<dbReference type="InterPro" id="IPR027437">
    <property type="entry name" value="Rbsml_uS13_C"/>
</dbReference>
<dbReference type="InterPro" id="IPR001892">
    <property type="entry name" value="Ribosomal_uS13"/>
</dbReference>
<dbReference type="InterPro" id="IPR010979">
    <property type="entry name" value="Ribosomal_uS13-like_H2TH"/>
</dbReference>
<dbReference type="InterPro" id="IPR019980">
    <property type="entry name" value="Ribosomal_uS13_bac-type"/>
</dbReference>
<dbReference type="InterPro" id="IPR018269">
    <property type="entry name" value="Ribosomal_uS13_CS"/>
</dbReference>
<dbReference type="NCBIfam" id="TIGR03631">
    <property type="entry name" value="uS13_bact"/>
    <property type="match status" value="1"/>
</dbReference>
<dbReference type="PANTHER" id="PTHR10871">
    <property type="entry name" value="30S RIBOSOMAL PROTEIN S13/40S RIBOSOMAL PROTEIN S18"/>
    <property type="match status" value="1"/>
</dbReference>
<dbReference type="PANTHER" id="PTHR10871:SF1">
    <property type="entry name" value="SMALL RIBOSOMAL SUBUNIT PROTEIN US13M"/>
    <property type="match status" value="1"/>
</dbReference>
<dbReference type="Pfam" id="PF00416">
    <property type="entry name" value="Ribosomal_S13"/>
    <property type="match status" value="1"/>
</dbReference>
<dbReference type="PIRSF" id="PIRSF002134">
    <property type="entry name" value="Ribosomal_S13"/>
    <property type="match status" value="1"/>
</dbReference>
<dbReference type="SUPFAM" id="SSF46946">
    <property type="entry name" value="S13-like H2TH domain"/>
    <property type="match status" value="1"/>
</dbReference>
<dbReference type="PROSITE" id="PS00646">
    <property type="entry name" value="RIBOSOMAL_S13_1"/>
    <property type="match status" value="1"/>
</dbReference>
<dbReference type="PROSITE" id="PS50159">
    <property type="entry name" value="RIBOSOMAL_S13_2"/>
    <property type="match status" value="1"/>
</dbReference>
<evidence type="ECO:0000255" key="1">
    <source>
        <dbReference type="HAMAP-Rule" id="MF_01315"/>
    </source>
</evidence>
<evidence type="ECO:0000256" key="2">
    <source>
        <dbReference type="SAM" id="MobiDB-lite"/>
    </source>
</evidence>
<evidence type="ECO:0000305" key="3"/>
<accession>A5VXR9</accession>
<proteinExistence type="inferred from homology"/>